<keyword id="KW-0002">3D-structure</keyword>
<keyword id="KW-0489">Methyltransferase</keyword>
<keyword id="KW-0949">S-adenosyl-L-methionine</keyword>
<keyword id="KW-0808">Transferase</keyword>
<organism>
    <name type="scientific">Pyrococcus horikoshii (strain ATCC 700860 / DSM 12428 / JCM 9974 / NBRC 100139 / OT-3)</name>
    <dbReference type="NCBI Taxonomy" id="70601"/>
    <lineage>
        <taxon>Archaea</taxon>
        <taxon>Methanobacteriati</taxon>
        <taxon>Methanobacteriota</taxon>
        <taxon>Thermococci</taxon>
        <taxon>Thermococcales</taxon>
        <taxon>Thermococcaceae</taxon>
        <taxon>Pyrococcus</taxon>
    </lineage>
</organism>
<name>DPHB_PYRHO</name>
<protein>
    <recommendedName>
        <fullName evidence="1 5">Diphthine synthase</fullName>
        <ecNumber evidence="1 3">2.1.1.98</ecNumber>
    </recommendedName>
    <alternativeName>
        <fullName evidence="1">Diphthamide biosynthesis methyltransferase</fullName>
    </alternativeName>
</protein>
<feature type="chain" id="PRO_0000156126" description="Diphthine synthase">
    <location>
        <begin position="1"/>
        <end position="265"/>
    </location>
</feature>
<feature type="binding site" evidence="1 8 9">
    <location>
        <position position="10"/>
    </location>
    <ligand>
        <name>S-adenosyl-L-methionine</name>
        <dbReference type="ChEBI" id="CHEBI:59789"/>
    </ligand>
</feature>
<feature type="binding site" evidence="1 8 9">
    <location>
        <position position="87"/>
    </location>
    <ligand>
        <name>S-adenosyl-L-methionine</name>
        <dbReference type="ChEBI" id="CHEBI:59789"/>
    </ligand>
</feature>
<feature type="binding site" evidence="1 8 9">
    <location>
        <position position="90"/>
    </location>
    <ligand>
        <name>S-adenosyl-L-methionine</name>
        <dbReference type="ChEBI" id="CHEBI:59789"/>
    </ligand>
</feature>
<feature type="binding site" evidence="1 8 9">
    <location>
        <begin position="115"/>
        <end position="116"/>
    </location>
    <ligand>
        <name>S-adenosyl-L-methionine</name>
        <dbReference type="ChEBI" id="CHEBI:59789"/>
    </ligand>
</feature>
<feature type="binding site" evidence="1 8 9">
    <location>
        <position position="166"/>
    </location>
    <ligand>
        <name>S-adenosyl-L-methionine</name>
        <dbReference type="ChEBI" id="CHEBI:59789"/>
    </ligand>
</feature>
<feature type="binding site" evidence="1 8 9">
    <location>
        <position position="209"/>
    </location>
    <ligand>
        <name>S-adenosyl-L-methionine</name>
        <dbReference type="ChEBI" id="CHEBI:59789"/>
    </ligand>
</feature>
<feature type="binding site" evidence="1 8 9">
    <location>
        <position position="234"/>
    </location>
    <ligand>
        <name>S-adenosyl-L-methionine</name>
        <dbReference type="ChEBI" id="CHEBI:59789"/>
    </ligand>
</feature>
<feature type="strand" evidence="12">
    <location>
        <begin position="3"/>
        <end position="7"/>
    </location>
</feature>
<feature type="strand" evidence="12">
    <location>
        <begin position="9"/>
        <end position="12"/>
    </location>
</feature>
<feature type="helix" evidence="12">
    <location>
        <begin position="13"/>
        <end position="15"/>
    </location>
</feature>
<feature type="helix" evidence="12">
    <location>
        <begin position="18"/>
        <end position="26"/>
    </location>
</feature>
<feature type="strand" evidence="12">
    <location>
        <begin position="28"/>
        <end position="33"/>
    </location>
</feature>
<feature type="strand" evidence="10">
    <location>
        <begin position="35"/>
        <end position="37"/>
    </location>
</feature>
<feature type="helix" evidence="12">
    <location>
        <begin position="44"/>
        <end position="51"/>
    </location>
</feature>
<feature type="strand" evidence="12">
    <location>
        <begin position="56"/>
        <end position="58"/>
    </location>
</feature>
<feature type="helix" evidence="12">
    <location>
        <begin position="60"/>
        <end position="70"/>
    </location>
</feature>
<feature type="helix" evidence="12">
    <location>
        <begin position="72"/>
        <end position="75"/>
    </location>
</feature>
<feature type="strand" evidence="12">
    <location>
        <begin position="80"/>
        <end position="86"/>
    </location>
</feature>
<feature type="strand" evidence="12">
    <location>
        <begin position="90"/>
        <end position="93"/>
    </location>
</feature>
<feature type="helix" evidence="12">
    <location>
        <begin position="95"/>
        <end position="103"/>
    </location>
</feature>
<feature type="strand" evidence="12">
    <location>
        <begin position="108"/>
        <end position="111"/>
    </location>
</feature>
<feature type="helix" evidence="12">
    <location>
        <begin position="116"/>
        <end position="119"/>
    </location>
</feature>
<feature type="helix" evidence="12">
    <location>
        <begin position="120"/>
        <end position="123"/>
    </location>
</feature>
<feature type="helix" evidence="12">
    <location>
        <begin position="127"/>
        <end position="129"/>
    </location>
</feature>
<feature type="strand" evidence="12">
    <location>
        <begin position="134"/>
        <end position="136"/>
    </location>
</feature>
<feature type="strand" evidence="11">
    <location>
        <begin position="141"/>
        <end position="143"/>
    </location>
</feature>
<feature type="helix" evidence="12">
    <location>
        <begin position="147"/>
        <end position="157"/>
    </location>
</feature>
<feature type="strand" evidence="12">
    <location>
        <begin position="161"/>
        <end position="166"/>
    </location>
</feature>
<feature type="helix" evidence="12">
    <location>
        <begin position="170"/>
        <end position="172"/>
    </location>
</feature>
<feature type="helix" evidence="12">
    <location>
        <begin position="178"/>
        <end position="192"/>
    </location>
</feature>
<feature type="strand" evidence="12">
    <location>
        <begin position="195"/>
        <end position="197"/>
    </location>
</feature>
<feature type="strand" evidence="12">
    <location>
        <begin position="202"/>
        <end position="208"/>
    </location>
</feature>
<feature type="strand" evidence="12">
    <location>
        <begin position="211"/>
        <end position="213"/>
    </location>
</feature>
<feature type="strand" evidence="12">
    <location>
        <begin position="215"/>
        <end position="220"/>
    </location>
</feature>
<feature type="helix" evidence="12">
    <location>
        <begin position="221"/>
        <end position="224"/>
    </location>
</feature>
<feature type="strand" evidence="12">
    <location>
        <begin position="234"/>
        <end position="238"/>
    </location>
</feature>
<feature type="helix" evidence="12">
    <location>
        <begin position="244"/>
        <end position="254"/>
    </location>
</feature>
<feature type="helix" evidence="12">
    <location>
        <begin position="258"/>
        <end position="261"/>
    </location>
</feature>
<reference key="1">
    <citation type="journal article" date="1998" name="DNA Res.">
        <title>Complete sequence and gene organization of the genome of a hyper-thermophilic archaebacterium, Pyrococcus horikoshii OT3.</title>
        <authorList>
            <person name="Kawarabayasi Y."/>
            <person name="Sawada M."/>
            <person name="Horikawa H."/>
            <person name="Haikawa Y."/>
            <person name="Hino Y."/>
            <person name="Yamamoto S."/>
            <person name="Sekine M."/>
            <person name="Baba S."/>
            <person name="Kosugi H."/>
            <person name="Hosoyama A."/>
            <person name="Nagai Y."/>
            <person name="Sakai M."/>
            <person name="Ogura K."/>
            <person name="Otsuka R."/>
            <person name="Nakazawa H."/>
            <person name="Takamiya M."/>
            <person name="Ohfuku Y."/>
            <person name="Funahashi T."/>
            <person name="Tanaka T."/>
            <person name="Kudoh Y."/>
            <person name="Yamazaki J."/>
            <person name="Kushida N."/>
            <person name="Oguchi A."/>
            <person name="Aoki K."/>
            <person name="Yoshizawa T."/>
            <person name="Nakamura Y."/>
            <person name="Robb F.T."/>
            <person name="Horikoshi K."/>
            <person name="Masuchi Y."/>
            <person name="Shizuya H."/>
            <person name="Kikuchi H."/>
        </authorList>
    </citation>
    <scope>NUCLEOTIDE SEQUENCE [LARGE SCALE GENOMIC DNA]</scope>
    <source>
        <strain>ATCC 700860 / DSM 12428 / JCM 9974 / NBRC 100139 / OT-3</strain>
    </source>
</reference>
<reference key="2">
    <citation type="journal article" date="2010" name="Biochemistry">
        <title>Reconstitution of diphthine synthase activity in vitro.</title>
        <authorList>
            <person name="Zhu X."/>
            <person name="Kim J."/>
            <person name="Su X."/>
            <person name="Lin H."/>
        </authorList>
    </citation>
    <scope>FUNCTION</scope>
    <scope>CATALYTIC ACTIVITY</scope>
    <scope>PATHWAY</scope>
    <source>
        <strain>ATCC 700860 / DSM 12428 / JCM 9974 / NBRC 100139 / OT-3</strain>
    </source>
</reference>
<reference key="3">
    <citation type="journal article" date="2008" name="Acta Crystallogr. D">
        <title>Structures of two archaeal diphthine synthases: insights into the post-translational modification of elongation factor 2.</title>
        <authorList>
            <person name="Kishishita S."/>
            <person name="Shimizu K."/>
            <person name="Murayama K."/>
            <person name="Terada T."/>
            <person name="Shirouzu M."/>
            <person name="Yokoyama S."/>
            <person name="Kunishima N."/>
        </authorList>
    </citation>
    <scope>X-RAY CRYSTALLOGRAPHY (2.1 ANGSTROMS) IN COMPLEX WITH S-ADENOSYL-L-HOMOCYSTEINE</scope>
    <scope>SUBUNIT</scope>
    <source>
        <strain>ATCC 700860 / DSM 12428 / JCM 9974 / NBRC 100139 / OT-3</strain>
    </source>
</reference>
<reference key="4">
    <citation type="submission" date="2009-02" db="PDB data bank">
        <title>Crystal structure of diphthine synthase from Pyrococcus horikoshii OT3.</title>
        <authorList>
            <consortium name="RIKEN structural genomics initiative (RSGI)"/>
        </authorList>
    </citation>
    <scope>X-RAY CRYSTALLOGRAPHY (1.65 ANGSTROMS) IN COMPLEX WITH S-ADENOSYL-L-HOMOCYSTEINE</scope>
    <source>
        <strain>ATCC 700860 / DSM 12428 / JCM 9974 / NBRC 100139 / OT-3</strain>
    </source>
</reference>
<accession>O58456</accession>
<comment type="function">
    <text evidence="1 3">S-adenosyl-L-methionine-dependent methyltransferase that catalyzes the trimethylation of the amino group of the modified target histidine residue in translation elongation factor 2 (EF-2), to form an intermediate called diphthine. The three successive methylation reactions represent the second step of diphthamide biosynthesis.</text>
</comment>
<comment type="catalytic activity">
    <reaction evidence="1 3">
        <text>2-[(3S)-amino-3-carboxypropyl]-L-histidyl-[translation elongation factor 2] + 3 S-adenosyl-L-methionine = diphthine-[translation elongation factor 2] + 3 S-adenosyl-L-homocysteine + 3 H(+)</text>
        <dbReference type="Rhea" id="RHEA:36415"/>
        <dbReference type="Rhea" id="RHEA-COMP:9749"/>
        <dbReference type="Rhea" id="RHEA-COMP:10172"/>
        <dbReference type="ChEBI" id="CHEBI:15378"/>
        <dbReference type="ChEBI" id="CHEBI:57856"/>
        <dbReference type="ChEBI" id="CHEBI:59789"/>
        <dbReference type="ChEBI" id="CHEBI:73995"/>
        <dbReference type="ChEBI" id="CHEBI:82696"/>
        <dbReference type="EC" id="2.1.1.98"/>
    </reaction>
</comment>
<comment type="pathway">
    <text evidence="1 3">Protein modification; peptidyl-diphthamide biosynthesis.</text>
</comment>
<comment type="subunit">
    <text evidence="1 2 4">Homodimer.</text>
</comment>
<comment type="miscellaneous">
    <text>The diphthine intermediate is not stable in vitro and readily eliminates the trimethylamino group. It is not known whether the elimination reaction also occurs physiologically.</text>
</comment>
<comment type="similarity">
    <text evidence="1 7">Belongs to the diphthine synthase family.</text>
</comment>
<evidence type="ECO:0000255" key="1">
    <source>
        <dbReference type="HAMAP-Rule" id="MF_01084"/>
    </source>
</evidence>
<evidence type="ECO:0000269" key="2">
    <source>
    </source>
</evidence>
<evidence type="ECO:0000269" key="3">
    <source>
    </source>
</evidence>
<evidence type="ECO:0000269" key="4">
    <source ref="4"/>
</evidence>
<evidence type="ECO:0000303" key="5">
    <source>
    </source>
</evidence>
<evidence type="ECO:0000303" key="6">
    <source>
    </source>
</evidence>
<evidence type="ECO:0000305" key="7"/>
<evidence type="ECO:0000305" key="8">
    <source>
    </source>
</evidence>
<evidence type="ECO:0000305" key="9">
    <source ref="4"/>
</evidence>
<evidence type="ECO:0007829" key="10">
    <source>
        <dbReference type="PDB" id="2E7R"/>
    </source>
</evidence>
<evidence type="ECO:0007829" key="11">
    <source>
        <dbReference type="PDB" id="2OWF"/>
    </source>
</evidence>
<evidence type="ECO:0007829" key="12">
    <source>
        <dbReference type="PDB" id="2Z6R"/>
    </source>
</evidence>
<dbReference type="EC" id="2.1.1.98" evidence="1 3"/>
<dbReference type="EMBL" id="BA000001">
    <property type="protein sequence ID" value="BAA29816.1"/>
    <property type="molecule type" value="Genomic_DNA"/>
</dbReference>
<dbReference type="PIR" id="F71119">
    <property type="entry name" value="F71119"/>
</dbReference>
<dbReference type="RefSeq" id="WP_010884823.1">
    <property type="nucleotide sequence ID" value="NC_000961.1"/>
</dbReference>
<dbReference type="PDB" id="1VCE">
    <property type="method" value="X-ray"/>
    <property type="resolution" value="2.10 A"/>
    <property type="chains" value="A/B=1-265"/>
</dbReference>
<dbReference type="PDB" id="1WNG">
    <property type="method" value="X-ray"/>
    <property type="resolution" value="2.10 A"/>
    <property type="chains" value="A/B=1-265"/>
</dbReference>
<dbReference type="PDB" id="2DEK">
    <property type="method" value="X-ray"/>
    <property type="resolution" value="1.65 A"/>
    <property type="chains" value="A/B=1-265"/>
</dbReference>
<dbReference type="PDB" id="2DSG">
    <property type="method" value="X-ray"/>
    <property type="resolution" value="2.00 A"/>
    <property type="chains" value="A/B=1-265"/>
</dbReference>
<dbReference type="PDB" id="2DSH">
    <property type="method" value="X-ray"/>
    <property type="resolution" value="2.00 A"/>
    <property type="chains" value="A/B=1-265"/>
</dbReference>
<dbReference type="PDB" id="2DSI">
    <property type="method" value="X-ray"/>
    <property type="resolution" value="2.20 A"/>
    <property type="chains" value="A/B=1-265"/>
</dbReference>
<dbReference type="PDB" id="2DV3">
    <property type="method" value="X-ray"/>
    <property type="resolution" value="1.90 A"/>
    <property type="chains" value="A/B=1-265"/>
</dbReference>
<dbReference type="PDB" id="2DV4">
    <property type="method" value="X-ray"/>
    <property type="resolution" value="2.20 A"/>
    <property type="chains" value="A/B=1-265"/>
</dbReference>
<dbReference type="PDB" id="2DV5">
    <property type="method" value="X-ray"/>
    <property type="resolution" value="2.20 A"/>
    <property type="chains" value="A/B=1-265"/>
</dbReference>
<dbReference type="PDB" id="2DV7">
    <property type="method" value="X-ray"/>
    <property type="resolution" value="2.30 A"/>
    <property type="chains" value="A/B=1-265"/>
</dbReference>
<dbReference type="PDB" id="2DXV">
    <property type="method" value="X-ray"/>
    <property type="resolution" value="1.90 A"/>
    <property type="chains" value="A/B=1-265"/>
</dbReference>
<dbReference type="PDB" id="2DXW">
    <property type="method" value="X-ray"/>
    <property type="resolution" value="1.80 A"/>
    <property type="chains" value="A/B=1-265"/>
</dbReference>
<dbReference type="PDB" id="2DXX">
    <property type="method" value="X-ray"/>
    <property type="resolution" value="1.75 A"/>
    <property type="chains" value="A/B=1-265"/>
</dbReference>
<dbReference type="PDB" id="2E07">
    <property type="method" value="X-ray"/>
    <property type="resolution" value="1.90 A"/>
    <property type="chains" value="A/B=1-265"/>
</dbReference>
<dbReference type="PDB" id="2E08">
    <property type="method" value="X-ray"/>
    <property type="resolution" value="2.00 A"/>
    <property type="chains" value="A/B=1-265"/>
</dbReference>
<dbReference type="PDB" id="2E15">
    <property type="method" value="X-ray"/>
    <property type="resolution" value="1.80 A"/>
    <property type="chains" value="A/B=1-265"/>
</dbReference>
<dbReference type="PDB" id="2E16">
    <property type="method" value="X-ray"/>
    <property type="resolution" value="2.00 A"/>
    <property type="chains" value="A/B=1-265"/>
</dbReference>
<dbReference type="PDB" id="2E17">
    <property type="method" value="X-ray"/>
    <property type="resolution" value="1.90 A"/>
    <property type="chains" value="A/B=1-265"/>
</dbReference>
<dbReference type="PDB" id="2E4N">
    <property type="method" value="X-ray"/>
    <property type="resolution" value="1.80 A"/>
    <property type="chains" value="A/B=1-265"/>
</dbReference>
<dbReference type="PDB" id="2E4R">
    <property type="method" value="X-ray"/>
    <property type="resolution" value="2.20 A"/>
    <property type="chains" value="A/B=1-265"/>
</dbReference>
<dbReference type="PDB" id="2E7R">
    <property type="method" value="X-ray"/>
    <property type="resolution" value="1.80 A"/>
    <property type="chains" value="A/B=1-265"/>
</dbReference>
<dbReference type="PDB" id="2E8H">
    <property type="method" value="X-ray"/>
    <property type="resolution" value="2.10 A"/>
    <property type="chains" value="A/B=1-265"/>
</dbReference>
<dbReference type="PDB" id="2E8Q">
    <property type="method" value="X-ray"/>
    <property type="resolution" value="2.50 A"/>
    <property type="chains" value="A/B=1-265"/>
</dbReference>
<dbReference type="PDB" id="2E8R">
    <property type="method" value="X-ray"/>
    <property type="resolution" value="2.00 A"/>
    <property type="chains" value="A/B=1-265"/>
</dbReference>
<dbReference type="PDB" id="2E8S">
    <property type="method" value="X-ray"/>
    <property type="resolution" value="2.50 A"/>
    <property type="chains" value="A/B=1-265"/>
</dbReference>
<dbReference type="PDB" id="2ED3">
    <property type="method" value="X-ray"/>
    <property type="resolution" value="2.50 A"/>
    <property type="chains" value="A/B=1-265"/>
</dbReference>
<dbReference type="PDB" id="2ED5">
    <property type="method" value="X-ray"/>
    <property type="resolution" value="2.10 A"/>
    <property type="chains" value="A/B=1-265"/>
</dbReference>
<dbReference type="PDB" id="2EEQ">
    <property type="method" value="X-ray"/>
    <property type="resolution" value="2.50 A"/>
    <property type="chains" value="A/B=1-265"/>
</dbReference>
<dbReference type="PDB" id="2EGB">
    <property type="method" value="X-ray"/>
    <property type="resolution" value="1.90 A"/>
    <property type="chains" value="A/B=1-265"/>
</dbReference>
<dbReference type="PDB" id="2EGL">
    <property type="method" value="X-ray"/>
    <property type="resolution" value="1.80 A"/>
    <property type="chains" value="A/B=1-265"/>
</dbReference>
<dbReference type="PDB" id="2EGS">
    <property type="method" value="X-ray"/>
    <property type="resolution" value="1.90 A"/>
    <property type="chains" value="A/B=1-265"/>
</dbReference>
<dbReference type="PDB" id="2EH2">
    <property type="method" value="X-ray"/>
    <property type="resolution" value="2.00 A"/>
    <property type="chains" value="A/B=1-265"/>
</dbReference>
<dbReference type="PDB" id="2EH4">
    <property type="method" value="X-ray"/>
    <property type="resolution" value="2.10 A"/>
    <property type="chains" value="A/B=1-265"/>
</dbReference>
<dbReference type="PDB" id="2EH5">
    <property type="method" value="X-ray"/>
    <property type="resolution" value="2.30 A"/>
    <property type="chains" value="A/B=1-265"/>
</dbReference>
<dbReference type="PDB" id="2EHC">
    <property type="method" value="X-ray"/>
    <property type="resolution" value="1.80 A"/>
    <property type="chains" value="A/B=1-265"/>
</dbReference>
<dbReference type="PDB" id="2EHL">
    <property type="method" value="X-ray"/>
    <property type="resolution" value="1.60 A"/>
    <property type="chains" value="A/B=1-265"/>
</dbReference>
<dbReference type="PDB" id="2EJJ">
    <property type="method" value="X-ray"/>
    <property type="resolution" value="2.10 A"/>
    <property type="chains" value="A/B=1-265"/>
</dbReference>
<dbReference type="PDB" id="2EJK">
    <property type="method" value="X-ray"/>
    <property type="resolution" value="2.40 A"/>
    <property type="chains" value="A/B=1-265"/>
</dbReference>
<dbReference type="PDB" id="2EJZ">
    <property type="method" value="X-ray"/>
    <property type="resolution" value="1.85 A"/>
    <property type="chains" value="A/B=1-265"/>
</dbReference>
<dbReference type="PDB" id="2EK2">
    <property type="method" value="X-ray"/>
    <property type="resolution" value="2.20 A"/>
    <property type="chains" value="A/B=1-265"/>
</dbReference>
<dbReference type="PDB" id="2EK3">
    <property type="method" value="X-ray"/>
    <property type="resolution" value="2.80 A"/>
    <property type="chains" value="A/B=1-265"/>
</dbReference>
<dbReference type="PDB" id="2EK4">
    <property type="method" value="X-ray"/>
    <property type="resolution" value="2.20 A"/>
    <property type="chains" value="A/B=1-265"/>
</dbReference>
<dbReference type="PDB" id="2EK7">
    <property type="method" value="X-ray"/>
    <property type="resolution" value="2.00 A"/>
    <property type="chains" value="A/B=1-265"/>
</dbReference>
<dbReference type="PDB" id="2EKA">
    <property type="method" value="X-ray"/>
    <property type="resolution" value="2.30 A"/>
    <property type="chains" value="A/B=1-265"/>
</dbReference>
<dbReference type="PDB" id="2EL0">
    <property type="method" value="X-ray"/>
    <property type="resolution" value="2.40 A"/>
    <property type="chains" value="A/B=1-265"/>
</dbReference>
<dbReference type="PDB" id="2EL1">
    <property type="method" value="X-ray"/>
    <property type="resolution" value="2.20 A"/>
    <property type="chains" value="A/B=1-265"/>
</dbReference>
<dbReference type="PDB" id="2EL2">
    <property type="method" value="X-ray"/>
    <property type="resolution" value="2.30 A"/>
    <property type="chains" value="A/B=1-265"/>
</dbReference>
<dbReference type="PDB" id="2EL3">
    <property type="method" value="X-ray"/>
    <property type="resolution" value="2.40 A"/>
    <property type="chains" value="A/B=1-265"/>
</dbReference>
<dbReference type="PDB" id="2ELD">
    <property type="method" value="X-ray"/>
    <property type="resolution" value="2.30 A"/>
    <property type="chains" value="A/B=1-265"/>
</dbReference>
<dbReference type="PDB" id="2ELE">
    <property type="method" value="X-ray"/>
    <property type="resolution" value="2.40 A"/>
    <property type="chains" value="A/B=1-265"/>
</dbReference>
<dbReference type="PDB" id="2EMR">
    <property type="method" value="X-ray"/>
    <property type="resolution" value="2.40 A"/>
    <property type="chains" value="A/B=1-265"/>
</dbReference>
<dbReference type="PDB" id="2EMU">
    <property type="method" value="X-ray"/>
    <property type="resolution" value="2.20 A"/>
    <property type="chains" value="A/B=1-265"/>
</dbReference>
<dbReference type="PDB" id="2EN5">
    <property type="method" value="X-ray"/>
    <property type="resolution" value="1.90 A"/>
    <property type="chains" value="A/B=1-265"/>
</dbReference>
<dbReference type="PDB" id="2ENI">
    <property type="method" value="X-ray"/>
    <property type="resolution" value="2.50 A"/>
    <property type="chains" value="A/B=1-265"/>
</dbReference>
<dbReference type="PDB" id="2HR8">
    <property type="method" value="X-ray"/>
    <property type="resolution" value="2.80 A"/>
    <property type="chains" value="A/B=1-265"/>
</dbReference>
<dbReference type="PDB" id="2HUQ">
    <property type="method" value="X-ray"/>
    <property type="resolution" value="2.20 A"/>
    <property type="chains" value="A/B=1-265"/>
</dbReference>
<dbReference type="PDB" id="2HUT">
    <property type="method" value="X-ray"/>
    <property type="resolution" value="2.40 A"/>
    <property type="chains" value="A/B=1-265"/>
</dbReference>
<dbReference type="PDB" id="2HUV">
    <property type="method" value="X-ray"/>
    <property type="resolution" value="2.10 A"/>
    <property type="chains" value="A/B=1-265"/>
</dbReference>
<dbReference type="PDB" id="2HUX">
    <property type="method" value="X-ray"/>
    <property type="resolution" value="2.40 A"/>
    <property type="chains" value="A/B=1-265"/>
</dbReference>
<dbReference type="PDB" id="2OWF">
    <property type="method" value="X-ray"/>
    <property type="resolution" value="2.20 A"/>
    <property type="chains" value="A=1-265"/>
</dbReference>
<dbReference type="PDB" id="2OWG">
    <property type="method" value="X-ray"/>
    <property type="resolution" value="2.10 A"/>
    <property type="chains" value="A/B=1-265"/>
</dbReference>
<dbReference type="PDB" id="2OWK">
    <property type="method" value="X-ray"/>
    <property type="resolution" value="2.00 A"/>
    <property type="chains" value="A/B=1-265"/>
</dbReference>
<dbReference type="PDB" id="2OWU">
    <property type="method" value="X-ray"/>
    <property type="resolution" value="2.20 A"/>
    <property type="chains" value="A/B=1-265"/>
</dbReference>
<dbReference type="PDB" id="2OWV">
    <property type="method" value="X-ray"/>
    <property type="resolution" value="2.80 A"/>
    <property type="chains" value="A/B=1-265"/>
</dbReference>
<dbReference type="PDB" id="2P2X">
    <property type="method" value="X-ray"/>
    <property type="resolution" value="2.90 A"/>
    <property type="chains" value="A/B=1-265"/>
</dbReference>
<dbReference type="PDB" id="2P5C">
    <property type="method" value="X-ray"/>
    <property type="resolution" value="2.40 A"/>
    <property type="chains" value="A/B=1-265"/>
</dbReference>
<dbReference type="PDB" id="2P5F">
    <property type="method" value="X-ray"/>
    <property type="resolution" value="2.50 A"/>
    <property type="chains" value="A/B=1-265"/>
</dbReference>
<dbReference type="PDB" id="2P6D">
    <property type="method" value="X-ray"/>
    <property type="resolution" value="2.40 A"/>
    <property type="chains" value="A/B=1-265"/>
</dbReference>
<dbReference type="PDB" id="2P6I">
    <property type="method" value="X-ray"/>
    <property type="resolution" value="2.20 A"/>
    <property type="chains" value="A/B=1-265"/>
</dbReference>
<dbReference type="PDB" id="2P6K">
    <property type="method" value="X-ray"/>
    <property type="resolution" value="2.10 A"/>
    <property type="chains" value="A/B=1-265"/>
</dbReference>
<dbReference type="PDB" id="2P6L">
    <property type="method" value="X-ray"/>
    <property type="resolution" value="2.00 A"/>
    <property type="chains" value="A/B=1-265"/>
</dbReference>
<dbReference type="PDB" id="2P9D">
    <property type="method" value="X-ray"/>
    <property type="resolution" value="2.10 A"/>
    <property type="chains" value="A/B=1-265"/>
</dbReference>
<dbReference type="PDB" id="2PB4">
    <property type="method" value="X-ray"/>
    <property type="resolution" value="2.10 A"/>
    <property type="chains" value="A/B=1-265"/>
</dbReference>
<dbReference type="PDB" id="2PB5">
    <property type="method" value="X-ray"/>
    <property type="resolution" value="2.10 A"/>
    <property type="chains" value="A/B=1-265"/>
</dbReference>
<dbReference type="PDB" id="2PB6">
    <property type="method" value="X-ray"/>
    <property type="resolution" value="2.20 A"/>
    <property type="chains" value="A/B=1-265"/>
</dbReference>
<dbReference type="PDB" id="2PCA">
    <property type="method" value="X-ray"/>
    <property type="resolution" value="2.00 A"/>
    <property type="chains" value="A/B=1-265"/>
</dbReference>
<dbReference type="PDB" id="2PCG">
    <property type="method" value="X-ray"/>
    <property type="resolution" value="2.20 A"/>
    <property type="chains" value="A/B=1-265"/>
</dbReference>
<dbReference type="PDB" id="2PCH">
    <property type="method" value="X-ray"/>
    <property type="resolution" value="2.00 A"/>
    <property type="chains" value="A/B=1-265"/>
</dbReference>
<dbReference type="PDB" id="2PCI">
    <property type="method" value="X-ray"/>
    <property type="resolution" value="2.00 A"/>
    <property type="chains" value="A/B=1-265"/>
</dbReference>
<dbReference type="PDB" id="2PCK">
    <property type="method" value="X-ray"/>
    <property type="resolution" value="2.60 A"/>
    <property type="chains" value="A/B=1-265"/>
</dbReference>
<dbReference type="PDB" id="2PCM">
    <property type="method" value="X-ray"/>
    <property type="resolution" value="2.40 A"/>
    <property type="chains" value="A/B=1-265"/>
</dbReference>
<dbReference type="PDB" id="2Z6R">
    <property type="method" value="X-ray"/>
    <property type="resolution" value="1.50 A"/>
    <property type="chains" value="A/B=1-265"/>
</dbReference>
<dbReference type="PDBsum" id="1VCE"/>
<dbReference type="PDBsum" id="1WNG"/>
<dbReference type="PDBsum" id="2DEK"/>
<dbReference type="PDBsum" id="2DSG"/>
<dbReference type="PDBsum" id="2DSH"/>
<dbReference type="PDBsum" id="2DSI"/>
<dbReference type="PDBsum" id="2DV3"/>
<dbReference type="PDBsum" id="2DV4"/>
<dbReference type="PDBsum" id="2DV5"/>
<dbReference type="PDBsum" id="2DV7"/>
<dbReference type="PDBsum" id="2DXV"/>
<dbReference type="PDBsum" id="2DXW"/>
<dbReference type="PDBsum" id="2DXX"/>
<dbReference type="PDBsum" id="2E07"/>
<dbReference type="PDBsum" id="2E08"/>
<dbReference type="PDBsum" id="2E15"/>
<dbReference type="PDBsum" id="2E16"/>
<dbReference type="PDBsum" id="2E17"/>
<dbReference type="PDBsum" id="2E4N"/>
<dbReference type="PDBsum" id="2E4R"/>
<dbReference type="PDBsum" id="2E7R"/>
<dbReference type="PDBsum" id="2E8H"/>
<dbReference type="PDBsum" id="2E8Q"/>
<dbReference type="PDBsum" id="2E8R"/>
<dbReference type="PDBsum" id="2E8S"/>
<dbReference type="PDBsum" id="2ED3"/>
<dbReference type="PDBsum" id="2ED5"/>
<dbReference type="PDBsum" id="2EEQ"/>
<dbReference type="PDBsum" id="2EGB"/>
<dbReference type="PDBsum" id="2EGL"/>
<dbReference type="PDBsum" id="2EGS"/>
<dbReference type="PDBsum" id="2EH2"/>
<dbReference type="PDBsum" id="2EH4"/>
<dbReference type="PDBsum" id="2EH5"/>
<dbReference type="PDBsum" id="2EHC"/>
<dbReference type="PDBsum" id="2EHL"/>
<dbReference type="PDBsum" id="2EJJ"/>
<dbReference type="PDBsum" id="2EJK"/>
<dbReference type="PDBsum" id="2EJZ"/>
<dbReference type="PDBsum" id="2EK2"/>
<dbReference type="PDBsum" id="2EK3"/>
<dbReference type="PDBsum" id="2EK4"/>
<dbReference type="PDBsum" id="2EK7"/>
<dbReference type="PDBsum" id="2EKA"/>
<dbReference type="PDBsum" id="2EL0"/>
<dbReference type="PDBsum" id="2EL1"/>
<dbReference type="PDBsum" id="2EL2"/>
<dbReference type="PDBsum" id="2EL3"/>
<dbReference type="PDBsum" id="2ELD"/>
<dbReference type="PDBsum" id="2ELE"/>
<dbReference type="PDBsum" id="2EMR"/>
<dbReference type="PDBsum" id="2EMU"/>
<dbReference type="PDBsum" id="2EN5"/>
<dbReference type="PDBsum" id="2ENI"/>
<dbReference type="PDBsum" id="2HR8"/>
<dbReference type="PDBsum" id="2HUQ"/>
<dbReference type="PDBsum" id="2HUT"/>
<dbReference type="PDBsum" id="2HUV"/>
<dbReference type="PDBsum" id="2HUX"/>
<dbReference type="PDBsum" id="2OWF"/>
<dbReference type="PDBsum" id="2OWG"/>
<dbReference type="PDBsum" id="2OWK"/>
<dbReference type="PDBsum" id="2OWU"/>
<dbReference type="PDBsum" id="2OWV"/>
<dbReference type="PDBsum" id="2P2X"/>
<dbReference type="PDBsum" id="2P5C"/>
<dbReference type="PDBsum" id="2P5F"/>
<dbReference type="PDBsum" id="2P6D"/>
<dbReference type="PDBsum" id="2P6I"/>
<dbReference type="PDBsum" id="2P6K"/>
<dbReference type="PDBsum" id="2P6L"/>
<dbReference type="PDBsum" id="2P9D"/>
<dbReference type="PDBsum" id="2PB4"/>
<dbReference type="PDBsum" id="2PB5"/>
<dbReference type="PDBsum" id="2PB6"/>
<dbReference type="PDBsum" id="2PCA"/>
<dbReference type="PDBsum" id="2PCG"/>
<dbReference type="PDBsum" id="2PCH"/>
<dbReference type="PDBsum" id="2PCI"/>
<dbReference type="PDBsum" id="2PCK"/>
<dbReference type="PDBsum" id="2PCM"/>
<dbReference type="PDBsum" id="2Z6R"/>
<dbReference type="SMR" id="O58456"/>
<dbReference type="STRING" id="70601.gene:9377672"/>
<dbReference type="EnsemblBacteria" id="BAA29816">
    <property type="protein sequence ID" value="BAA29816"/>
    <property type="gene ID" value="BAA29816"/>
</dbReference>
<dbReference type="GeneID" id="1443058"/>
<dbReference type="KEGG" id="pho:PH0725"/>
<dbReference type="eggNOG" id="arCOG04161">
    <property type="taxonomic scope" value="Archaea"/>
</dbReference>
<dbReference type="OrthoDB" id="39139at2157"/>
<dbReference type="BioCyc" id="MetaCyc:MONOMER-18825"/>
<dbReference type="BRENDA" id="2.1.1.98">
    <property type="organism ID" value="5244"/>
</dbReference>
<dbReference type="UniPathway" id="UPA00559"/>
<dbReference type="EvolutionaryTrace" id="O58456"/>
<dbReference type="Proteomes" id="UP000000752">
    <property type="component" value="Chromosome"/>
</dbReference>
<dbReference type="GO" id="GO:0004164">
    <property type="term" value="F:diphthine synthase activity"/>
    <property type="evidence" value="ECO:0000314"/>
    <property type="project" value="UniProtKB"/>
</dbReference>
<dbReference type="GO" id="GO:0032259">
    <property type="term" value="P:methylation"/>
    <property type="evidence" value="ECO:0007669"/>
    <property type="project" value="UniProtKB-KW"/>
</dbReference>
<dbReference type="GO" id="GO:0017183">
    <property type="term" value="P:protein histidyl modification to diphthamide"/>
    <property type="evidence" value="ECO:0000314"/>
    <property type="project" value="UniProtKB"/>
</dbReference>
<dbReference type="CDD" id="cd11647">
    <property type="entry name" value="DHP5_DphB"/>
    <property type="match status" value="1"/>
</dbReference>
<dbReference type="FunFam" id="3.30.950.10:FF:000004">
    <property type="entry name" value="Diphthine synthase putative"/>
    <property type="match status" value="1"/>
</dbReference>
<dbReference type="FunFam" id="3.40.1010.10:FF:000004">
    <property type="entry name" value="Putative diphthine synthase"/>
    <property type="match status" value="1"/>
</dbReference>
<dbReference type="Gene3D" id="3.40.1010.10">
    <property type="entry name" value="Cobalt-precorrin-4 Transmethylase, Domain 1"/>
    <property type="match status" value="1"/>
</dbReference>
<dbReference type="Gene3D" id="3.30.950.10">
    <property type="entry name" value="Methyltransferase, Cobalt-precorrin-4 Transmethylase, Domain 2"/>
    <property type="match status" value="1"/>
</dbReference>
<dbReference type="HAMAP" id="MF_01084">
    <property type="entry name" value="Diphthine_synth"/>
    <property type="match status" value="1"/>
</dbReference>
<dbReference type="InterPro" id="IPR000878">
    <property type="entry name" value="4pyrrol_Mease"/>
</dbReference>
<dbReference type="InterPro" id="IPR035996">
    <property type="entry name" value="4pyrrol_Methylase_sf"/>
</dbReference>
<dbReference type="InterPro" id="IPR014777">
    <property type="entry name" value="4pyrrole_Mease_sub1"/>
</dbReference>
<dbReference type="InterPro" id="IPR014776">
    <property type="entry name" value="4pyrrole_Mease_sub2"/>
</dbReference>
<dbReference type="InterPro" id="IPR004551">
    <property type="entry name" value="Dphthn_synthase"/>
</dbReference>
<dbReference type="NCBIfam" id="TIGR00522">
    <property type="entry name" value="dph5"/>
    <property type="match status" value="1"/>
</dbReference>
<dbReference type="PANTHER" id="PTHR10882:SF0">
    <property type="entry name" value="DIPHTHINE METHYL ESTER SYNTHASE"/>
    <property type="match status" value="1"/>
</dbReference>
<dbReference type="PANTHER" id="PTHR10882">
    <property type="entry name" value="DIPHTHINE SYNTHASE"/>
    <property type="match status" value="1"/>
</dbReference>
<dbReference type="Pfam" id="PF00590">
    <property type="entry name" value="TP_methylase"/>
    <property type="match status" value="1"/>
</dbReference>
<dbReference type="PIRSF" id="PIRSF036432">
    <property type="entry name" value="Diphthine_synth"/>
    <property type="match status" value="1"/>
</dbReference>
<dbReference type="SUPFAM" id="SSF53790">
    <property type="entry name" value="Tetrapyrrole methylase"/>
    <property type="match status" value="1"/>
</dbReference>
<proteinExistence type="evidence at protein level"/>
<sequence length="265" mass="29576">MVLYFIGLGLYDERDITVKGLEIAKKCDYVFAEFYTSLMAGTTLGRIQKLIGKEIRVLSREDVELNFENIVLPLAKENDVAFLTPGDPLVATTHAELRIRAKRAGVESYVIHAPSIYSAVGITGLHIYKFGKSATVAYPEGNWFPTSYYDVIKENAERGLHTLLFLDIKAEKRMYMTANEAMELLLKVEDMKKGGVFTDDTLVVVLARAGSLNPTIRAGYVKDLIREDFGDPPHILIVPGKLHIVEAEYLVEIAGAPREILRVNV</sequence>
<gene>
    <name evidence="1" type="primary">dphB</name>
    <name evidence="6" type="synonym">dph5</name>
    <name type="ordered locus">PH0725</name>
</gene>